<organism>
    <name type="scientific">Shigella flexneri</name>
    <dbReference type="NCBI Taxonomy" id="623"/>
    <lineage>
        <taxon>Bacteria</taxon>
        <taxon>Pseudomonadati</taxon>
        <taxon>Pseudomonadota</taxon>
        <taxon>Gammaproteobacteria</taxon>
        <taxon>Enterobacterales</taxon>
        <taxon>Enterobacteriaceae</taxon>
        <taxon>Shigella</taxon>
    </lineage>
</organism>
<accession>P0A714</accession>
<accession>P32172</accession>
<reference key="1">
    <citation type="journal article" date="2002" name="Nucleic Acids Res.">
        <title>Genome sequence of Shigella flexneri 2a: insights into pathogenicity through comparison with genomes of Escherichia coli K12 and O157.</title>
        <authorList>
            <person name="Jin Q."/>
            <person name="Yuan Z."/>
            <person name="Xu J."/>
            <person name="Wang Y."/>
            <person name="Shen Y."/>
            <person name="Lu W."/>
            <person name="Wang J."/>
            <person name="Liu H."/>
            <person name="Yang J."/>
            <person name="Yang F."/>
            <person name="Zhang X."/>
            <person name="Zhang J."/>
            <person name="Yang G."/>
            <person name="Wu H."/>
            <person name="Qu D."/>
            <person name="Dong J."/>
            <person name="Sun L."/>
            <person name="Xue Y."/>
            <person name="Zhao A."/>
            <person name="Gao Y."/>
            <person name="Zhu J."/>
            <person name="Kan B."/>
            <person name="Ding K."/>
            <person name="Chen S."/>
            <person name="Cheng H."/>
            <person name="Yao Z."/>
            <person name="He B."/>
            <person name="Chen R."/>
            <person name="Ma D."/>
            <person name="Qiang B."/>
            <person name="Wen Y."/>
            <person name="Hou Y."/>
            <person name="Yu J."/>
        </authorList>
    </citation>
    <scope>NUCLEOTIDE SEQUENCE [LARGE SCALE GENOMIC DNA]</scope>
    <source>
        <strain>301 / Serotype 2a</strain>
    </source>
</reference>
<reference key="2">
    <citation type="journal article" date="2003" name="Infect. Immun.">
        <title>Complete genome sequence and comparative genomics of Shigella flexneri serotype 2a strain 2457T.</title>
        <authorList>
            <person name="Wei J."/>
            <person name="Goldberg M.B."/>
            <person name="Burland V."/>
            <person name="Venkatesan M.M."/>
            <person name="Deng W."/>
            <person name="Fournier G."/>
            <person name="Mayhew G.F."/>
            <person name="Plunkett G. III"/>
            <person name="Rose D.J."/>
            <person name="Darling A."/>
            <person name="Mau B."/>
            <person name="Perna N.T."/>
            <person name="Payne S.M."/>
            <person name="Runyen-Janecky L.J."/>
            <person name="Zhou S."/>
            <person name="Schwartz D.C."/>
            <person name="Blattner F.R."/>
        </authorList>
    </citation>
    <scope>NUCLEOTIDE SEQUENCE [LARGE SCALE GENOMIC DNA]</scope>
    <source>
        <strain>ATCC 700930 / 2457T / Serotype 2a</strain>
    </source>
</reference>
<keyword id="KW-0997">Cell inner membrane</keyword>
<keyword id="KW-1003">Cell membrane</keyword>
<keyword id="KW-0472">Membrane</keyword>
<keyword id="KW-1185">Reference proteome</keyword>
<keyword id="KW-0762">Sugar transport</keyword>
<keyword id="KW-0769">Symport</keyword>
<keyword id="KW-0812">Transmembrane</keyword>
<keyword id="KW-1133">Transmembrane helix</keyword>
<keyword id="KW-0813">Transport</keyword>
<name>KDGT_SHIFL</name>
<proteinExistence type="inferred from homology"/>
<feature type="chain" id="PRO_0000209684" description="2-keto-3-deoxygluconate permease">
    <location>
        <begin position="1"/>
        <end position="327"/>
    </location>
</feature>
<feature type="transmembrane region" description="Helical" evidence="1">
    <location>
        <begin position="10"/>
        <end position="30"/>
    </location>
</feature>
<feature type="transmembrane region" description="Helical" evidence="1">
    <location>
        <begin position="42"/>
        <end position="62"/>
    </location>
</feature>
<feature type="transmembrane region" description="Helical" evidence="1">
    <location>
        <begin position="73"/>
        <end position="93"/>
    </location>
</feature>
<feature type="transmembrane region" description="Helical" evidence="1">
    <location>
        <begin position="95"/>
        <end position="115"/>
    </location>
</feature>
<feature type="transmembrane region" description="Helical" evidence="1">
    <location>
        <begin position="139"/>
        <end position="159"/>
    </location>
</feature>
<feature type="transmembrane region" description="Helical" evidence="1">
    <location>
        <begin position="163"/>
        <end position="183"/>
    </location>
</feature>
<feature type="transmembrane region" description="Helical" evidence="1">
    <location>
        <begin position="199"/>
        <end position="219"/>
    </location>
</feature>
<feature type="transmembrane region" description="Helical" evidence="1">
    <location>
        <begin position="224"/>
        <end position="244"/>
    </location>
</feature>
<feature type="transmembrane region" description="Helical" evidence="1">
    <location>
        <begin position="254"/>
        <end position="274"/>
    </location>
</feature>
<feature type="transmembrane region" description="Helical" evidence="1">
    <location>
        <begin position="289"/>
        <end position="309"/>
    </location>
</feature>
<protein>
    <recommendedName>
        <fullName evidence="1">2-keto-3-deoxygluconate permease</fullName>
        <shortName evidence="1">KDG permease</shortName>
    </recommendedName>
</protein>
<gene>
    <name evidence="1" type="primary">kdgT</name>
    <name type="ordered locus">SF3986</name>
    <name type="ordered locus">S3762</name>
</gene>
<comment type="function">
    <text evidence="1">Catalyzes the proton-dependent uptake of 2-keto-3-deoxygluconate (KDG) into the cell.</text>
</comment>
<comment type="catalytic activity">
    <reaction evidence="1">
        <text>2-dehydro-3-deoxy-D-gluconate(in) + H(+)(in) = 2-dehydro-3-deoxy-D-gluconate(out) + H(+)(out)</text>
        <dbReference type="Rhea" id="RHEA:29943"/>
        <dbReference type="ChEBI" id="CHEBI:15378"/>
        <dbReference type="ChEBI" id="CHEBI:57990"/>
    </reaction>
    <physiologicalReaction direction="right-to-left" evidence="1">
        <dbReference type="Rhea" id="RHEA:29945"/>
    </physiologicalReaction>
</comment>
<comment type="subcellular location">
    <subcellularLocation>
        <location evidence="1">Cell inner membrane</location>
        <topology evidence="1">Multi-pass membrane protein</topology>
    </subcellularLocation>
</comment>
<comment type="similarity">
    <text evidence="1 2">Belongs to the KdgT transporter family.</text>
</comment>
<sequence>MQIKRSIEKIPGGMMLVPLFLGALCHTFSPGAGKYFGSFTNGMITGTVPILAVWFFCMGASIKLSATGTVLRKSGTLVVTKIAVAWVVAAIASRIIPEHGVEVGFFAGLSTLALVAAMDMTNGGLYASIMQQYGTKEEAGAFVLMSLESGPLMTMIILGTAGIASFEPHVFVGAVLPFLVGFALGNLDPELREFFSKAVQTLIPFFAFALGNTIDLTVIAQTGLLGILLGVAVIIVTGIPLIIADKLIGGGDGTAGIAASSSAGAAVATPVLIAEMVPAFKPMAPAATSLVATAVIVTSILVPILTSIWSRKVKARAAKIEILGTVK</sequence>
<evidence type="ECO:0000255" key="1">
    <source>
        <dbReference type="HAMAP-Rule" id="MF_00070"/>
    </source>
</evidence>
<evidence type="ECO:0000305" key="2"/>
<dbReference type="EMBL" id="AE005674">
    <property type="protein sequence ID" value="AAN45420.2"/>
    <property type="molecule type" value="Genomic_DNA"/>
</dbReference>
<dbReference type="EMBL" id="AE014073">
    <property type="protein sequence ID" value="AAP18780.1"/>
    <property type="molecule type" value="Genomic_DNA"/>
</dbReference>
<dbReference type="RefSeq" id="NP_709713.2">
    <property type="nucleotide sequence ID" value="NC_004337.2"/>
</dbReference>
<dbReference type="RefSeq" id="WP_001166063.1">
    <property type="nucleotide sequence ID" value="NZ_UIPU01000091.1"/>
</dbReference>
<dbReference type="STRING" id="198214.SF3986"/>
<dbReference type="PaxDb" id="198214-SF3986"/>
<dbReference type="GeneID" id="1026571"/>
<dbReference type="GeneID" id="75204583"/>
<dbReference type="KEGG" id="sfl:SF3986"/>
<dbReference type="KEGG" id="sfx:S3762"/>
<dbReference type="PATRIC" id="fig|198214.7.peg.4698"/>
<dbReference type="HOGENOM" id="CLU_057476_0_1_6"/>
<dbReference type="Proteomes" id="UP000001006">
    <property type="component" value="Chromosome"/>
</dbReference>
<dbReference type="Proteomes" id="UP000002673">
    <property type="component" value="Chromosome"/>
</dbReference>
<dbReference type="GO" id="GO:0005886">
    <property type="term" value="C:plasma membrane"/>
    <property type="evidence" value="ECO:0007669"/>
    <property type="project" value="UniProtKB-SubCell"/>
</dbReference>
<dbReference type="GO" id="GO:0015649">
    <property type="term" value="F:2-keto-3-deoxygluconate:proton symporter activity"/>
    <property type="evidence" value="ECO:0007669"/>
    <property type="project" value="UniProtKB-UniRule"/>
</dbReference>
<dbReference type="HAMAP" id="MF_00070">
    <property type="entry name" value="KdgT"/>
    <property type="match status" value="1"/>
</dbReference>
<dbReference type="InterPro" id="IPR004684">
    <property type="entry name" value="2keto-3dGluconate_permease"/>
</dbReference>
<dbReference type="InterPro" id="IPR018395">
    <property type="entry name" value="2keto-3dGluconate_permease_sub"/>
</dbReference>
<dbReference type="NCBIfam" id="TIGR00793">
    <property type="entry name" value="kdgT"/>
    <property type="match status" value="1"/>
</dbReference>
<dbReference type="Pfam" id="PF03812">
    <property type="entry name" value="KdgT"/>
    <property type="match status" value="1"/>
</dbReference>